<sequence>MEEEFKDKGLPPTLLHLIPDGREWKVKEADGEGSRNTNLDADEDKELELKLGLPGVQQEERAADSREKIQQQQRESSSEPSIGCFPTHSKPTTSIGTTGAKRGFFAIVGATLEGYNQSHRDTEECGKELTLGDENMAGERKKGCCPSPPCSAAAHSSNPQGRGAIPPVVGWPPIRSFRRNLTNGSSFKQSPERQNDEADDKAKPICKKRPLVKINMDGIPIGRKVDLQIYDSYQKLSSAVEELFRGFLEAQKDLSCAESGEQGAEDKIFSGLLDGTGVYTLVYEDNDGDRMLAGDIPWKVFVSTVKRLRVMRRSELPHDMIGADPVK</sequence>
<accession>Q5W670</accession>
<accession>Q0DGM3</accession>
<gene>
    <name type="primary">IAA18</name>
    <name type="ordered locus">Os05g0523300</name>
    <name type="ordered locus">LOC_Os05g44810</name>
    <name evidence="6" type="ORF">OsJ_19257</name>
    <name type="ORF">OSJNBa0075A10.11</name>
</gene>
<protein>
    <recommendedName>
        <fullName>Auxin-responsive protein IAA18</fullName>
    </recommendedName>
    <alternativeName>
        <fullName>Indoleacetic acid-induced protein 18</fullName>
    </alternativeName>
</protein>
<feature type="chain" id="PRO_0000223217" description="Auxin-responsive protein IAA18">
    <location>
        <begin position="1"/>
        <end position="327"/>
    </location>
</feature>
<feature type="domain" description="PB1" evidence="2">
    <location>
        <begin position="209"/>
        <end position="313"/>
    </location>
</feature>
<feature type="region of interest" description="Disordered" evidence="3">
    <location>
        <begin position="26"/>
        <end position="45"/>
    </location>
</feature>
<feature type="region of interest" description="Disordered" evidence="3">
    <location>
        <begin position="52"/>
        <end position="98"/>
    </location>
</feature>
<feature type="region of interest" description="Disordered" evidence="3">
    <location>
        <begin position="180"/>
        <end position="202"/>
    </location>
</feature>
<feature type="short sequence motif" description="EAR-like (transcriptional repression)" evidence="1">
    <location>
        <begin position="49"/>
        <end position="53"/>
    </location>
</feature>
<feature type="compositionally biased region" description="Basic and acidic residues" evidence="3">
    <location>
        <begin position="58"/>
        <end position="69"/>
    </location>
</feature>
<feature type="compositionally biased region" description="Low complexity" evidence="3">
    <location>
        <begin position="70"/>
        <end position="82"/>
    </location>
</feature>
<feature type="compositionally biased region" description="Polar residues" evidence="3">
    <location>
        <begin position="180"/>
        <end position="189"/>
    </location>
</feature>
<feature type="compositionally biased region" description="Basic and acidic residues" evidence="3">
    <location>
        <begin position="190"/>
        <end position="202"/>
    </location>
</feature>
<dbReference type="EMBL" id="AC144740">
    <property type="protein sequence ID" value="AAV44038.1"/>
    <property type="molecule type" value="Genomic_DNA"/>
</dbReference>
<dbReference type="EMBL" id="AP008211">
    <property type="protein sequence ID" value="BAF18000.1"/>
    <property type="molecule type" value="Genomic_DNA"/>
</dbReference>
<dbReference type="EMBL" id="AP014961">
    <property type="protein sequence ID" value="BAS94962.1"/>
    <property type="molecule type" value="Genomic_DNA"/>
</dbReference>
<dbReference type="EMBL" id="CM000142">
    <property type="protein sequence ID" value="EEE64413.1"/>
    <property type="molecule type" value="Genomic_DNA"/>
</dbReference>
<dbReference type="EMBL" id="AK071192">
    <property type="protein sequence ID" value="BAG92363.1"/>
    <property type="molecule type" value="mRNA"/>
</dbReference>
<dbReference type="RefSeq" id="XP_015640491.1">
    <property type="nucleotide sequence ID" value="XM_015785005.1"/>
</dbReference>
<dbReference type="SMR" id="Q5W670"/>
<dbReference type="FunCoup" id="Q5W670">
    <property type="interactions" value="126"/>
</dbReference>
<dbReference type="STRING" id="39947.Q5W670"/>
<dbReference type="PaxDb" id="39947-Q5W670"/>
<dbReference type="EnsemblPlants" id="Os05t0523300-01">
    <property type="protein sequence ID" value="Os05t0523300-01"/>
    <property type="gene ID" value="Os05g0523300"/>
</dbReference>
<dbReference type="Gramene" id="Os05t0523300-01">
    <property type="protein sequence ID" value="Os05t0523300-01"/>
    <property type="gene ID" value="Os05g0523300"/>
</dbReference>
<dbReference type="KEGG" id="dosa:Os05g0523300"/>
<dbReference type="eggNOG" id="ENOG502R4CC">
    <property type="taxonomic scope" value="Eukaryota"/>
</dbReference>
<dbReference type="HOGENOM" id="CLU_049393_2_0_1"/>
<dbReference type="InParanoid" id="Q5W670"/>
<dbReference type="OMA" id="AGDIPWK"/>
<dbReference type="OrthoDB" id="615826at2759"/>
<dbReference type="PlantReactome" id="R-OSA-5608118">
    <property type="pathway name" value="Auxin signalling"/>
</dbReference>
<dbReference type="Proteomes" id="UP000000763">
    <property type="component" value="Chromosome 5"/>
</dbReference>
<dbReference type="Proteomes" id="UP000007752">
    <property type="component" value="Chromosome 5"/>
</dbReference>
<dbReference type="Proteomes" id="UP000059680">
    <property type="component" value="Chromosome 5"/>
</dbReference>
<dbReference type="GO" id="GO:0005634">
    <property type="term" value="C:nucleus"/>
    <property type="evidence" value="ECO:0007669"/>
    <property type="project" value="UniProtKB-SubCell"/>
</dbReference>
<dbReference type="GO" id="GO:0009734">
    <property type="term" value="P:auxin-activated signaling pathway"/>
    <property type="evidence" value="ECO:0007669"/>
    <property type="project" value="UniProtKB-KW"/>
</dbReference>
<dbReference type="GO" id="GO:0006355">
    <property type="term" value="P:regulation of DNA-templated transcription"/>
    <property type="evidence" value="ECO:0007669"/>
    <property type="project" value="InterPro"/>
</dbReference>
<dbReference type="GO" id="GO:0009733">
    <property type="term" value="P:response to auxin"/>
    <property type="evidence" value="ECO:0000305"/>
    <property type="project" value="Gramene"/>
</dbReference>
<dbReference type="FunFam" id="3.10.20.90:FF:000225">
    <property type="entry name" value="Auxin-responsive protein"/>
    <property type="match status" value="1"/>
</dbReference>
<dbReference type="Gene3D" id="3.10.20.90">
    <property type="entry name" value="Phosphatidylinositol 3-kinase Catalytic Subunit, Chain A, domain 1"/>
    <property type="match status" value="1"/>
</dbReference>
<dbReference type="InterPro" id="IPR033389">
    <property type="entry name" value="AUX/IAA_dom"/>
</dbReference>
<dbReference type="InterPro" id="IPR003311">
    <property type="entry name" value="AUX_IAA"/>
</dbReference>
<dbReference type="InterPro" id="IPR053793">
    <property type="entry name" value="PB1-like"/>
</dbReference>
<dbReference type="PANTHER" id="PTHR31734">
    <property type="entry name" value="AUXIN-RESPONSIVE PROTEIN IAA17"/>
    <property type="match status" value="1"/>
</dbReference>
<dbReference type="PANTHER" id="PTHR31734:SF237">
    <property type="entry name" value="AUXIN-RESPONSIVE PROTEIN IAA18"/>
    <property type="match status" value="1"/>
</dbReference>
<dbReference type="Pfam" id="PF02309">
    <property type="entry name" value="AUX_IAA"/>
    <property type="match status" value="1"/>
</dbReference>
<dbReference type="SUPFAM" id="SSF54277">
    <property type="entry name" value="CAD &amp; PB1 domains"/>
    <property type="match status" value="1"/>
</dbReference>
<dbReference type="PROSITE" id="PS51745">
    <property type="entry name" value="PB1"/>
    <property type="match status" value="1"/>
</dbReference>
<comment type="function">
    <text evidence="1">Aux/IAA proteins are short-lived transcriptional factors that function as repressors of early auxin response genes at low auxin concentrations.</text>
</comment>
<comment type="subunit">
    <text evidence="1">Homodimers and heterodimers.</text>
</comment>
<comment type="subcellular location">
    <subcellularLocation>
        <location evidence="1">Nucleus</location>
    </subcellularLocation>
</comment>
<comment type="tissue specificity">
    <text evidence="4">Highly expressed in flowers. Expressed in roots and etiolated seedlings.</text>
</comment>
<comment type="induction">
    <text evidence="4">Not induced by auxin.</text>
</comment>
<comment type="similarity">
    <text evidence="5">Belongs to the Aux/IAA family.</text>
</comment>
<name>IAA18_ORYSJ</name>
<proteinExistence type="evidence at transcript level"/>
<keyword id="KW-0927">Auxin signaling pathway</keyword>
<keyword id="KW-0539">Nucleus</keyword>
<keyword id="KW-1185">Reference proteome</keyword>
<keyword id="KW-0678">Repressor</keyword>
<keyword id="KW-0804">Transcription</keyword>
<keyword id="KW-0805">Transcription regulation</keyword>
<organism>
    <name type="scientific">Oryza sativa subsp. japonica</name>
    <name type="common">Rice</name>
    <dbReference type="NCBI Taxonomy" id="39947"/>
    <lineage>
        <taxon>Eukaryota</taxon>
        <taxon>Viridiplantae</taxon>
        <taxon>Streptophyta</taxon>
        <taxon>Embryophyta</taxon>
        <taxon>Tracheophyta</taxon>
        <taxon>Spermatophyta</taxon>
        <taxon>Magnoliopsida</taxon>
        <taxon>Liliopsida</taxon>
        <taxon>Poales</taxon>
        <taxon>Poaceae</taxon>
        <taxon>BOP clade</taxon>
        <taxon>Oryzoideae</taxon>
        <taxon>Oryzeae</taxon>
        <taxon>Oryzinae</taxon>
        <taxon>Oryza</taxon>
        <taxon>Oryza sativa</taxon>
    </lineage>
</organism>
<reference key="1">
    <citation type="journal article" date="2005" name="Mol. Genet. Genomics">
        <title>A fine physical map of the rice chromosome 5.</title>
        <authorList>
            <person name="Cheng C.-H."/>
            <person name="Chung M.C."/>
            <person name="Liu S.-M."/>
            <person name="Chen S.-K."/>
            <person name="Kao F.Y."/>
            <person name="Lin S.-J."/>
            <person name="Hsiao S.-H."/>
            <person name="Tseng I.C."/>
            <person name="Hsing Y.-I.C."/>
            <person name="Wu H.-P."/>
            <person name="Chen C.-S."/>
            <person name="Shaw J.-F."/>
            <person name="Wu J."/>
            <person name="Matsumoto T."/>
            <person name="Sasaki T."/>
            <person name="Chen H.-C."/>
            <person name="Chow T.-Y."/>
        </authorList>
    </citation>
    <scope>NUCLEOTIDE SEQUENCE [LARGE SCALE GENOMIC DNA]</scope>
    <source>
        <strain>cv. Nipponbare</strain>
    </source>
</reference>
<reference key="2">
    <citation type="journal article" date="2005" name="Nature">
        <title>The map-based sequence of the rice genome.</title>
        <authorList>
            <consortium name="International rice genome sequencing project (IRGSP)"/>
        </authorList>
    </citation>
    <scope>NUCLEOTIDE SEQUENCE [LARGE SCALE GENOMIC DNA]</scope>
    <source>
        <strain>cv. Nipponbare</strain>
    </source>
</reference>
<reference key="3">
    <citation type="journal article" date="2008" name="Nucleic Acids Res.">
        <title>The rice annotation project database (RAP-DB): 2008 update.</title>
        <authorList>
            <consortium name="The rice annotation project (RAP)"/>
        </authorList>
    </citation>
    <scope>GENOME REANNOTATION</scope>
    <source>
        <strain>cv. Nipponbare</strain>
    </source>
</reference>
<reference key="4">
    <citation type="journal article" date="2013" name="Rice">
        <title>Improvement of the Oryza sativa Nipponbare reference genome using next generation sequence and optical map data.</title>
        <authorList>
            <person name="Kawahara Y."/>
            <person name="de la Bastide M."/>
            <person name="Hamilton J.P."/>
            <person name="Kanamori H."/>
            <person name="McCombie W.R."/>
            <person name="Ouyang S."/>
            <person name="Schwartz D.C."/>
            <person name="Tanaka T."/>
            <person name="Wu J."/>
            <person name="Zhou S."/>
            <person name="Childs K.L."/>
            <person name="Davidson R.M."/>
            <person name="Lin H."/>
            <person name="Quesada-Ocampo L."/>
            <person name="Vaillancourt B."/>
            <person name="Sakai H."/>
            <person name="Lee S.S."/>
            <person name="Kim J."/>
            <person name="Numa H."/>
            <person name="Itoh T."/>
            <person name="Buell C.R."/>
            <person name="Matsumoto T."/>
        </authorList>
    </citation>
    <scope>GENOME REANNOTATION</scope>
    <source>
        <strain>cv. Nipponbare</strain>
    </source>
</reference>
<reference key="5">
    <citation type="journal article" date="2005" name="PLoS Biol.">
        <title>The genomes of Oryza sativa: a history of duplications.</title>
        <authorList>
            <person name="Yu J."/>
            <person name="Wang J."/>
            <person name="Lin W."/>
            <person name="Li S."/>
            <person name="Li H."/>
            <person name="Zhou J."/>
            <person name="Ni P."/>
            <person name="Dong W."/>
            <person name="Hu S."/>
            <person name="Zeng C."/>
            <person name="Zhang J."/>
            <person name="Zhang Y."/>
            <person name="Li R."/>
            <person name="Xu Z."/>
            <person name="Li S."/>
            <person name="Li X."/>
            <person name="Zheng H."/>
            <person name="Cong L."/>
            <person name="Lin L."/>
            <person name="Yin J."/>
            <person name="Geng J."/>
            <person name="Li G."/>
            <person name="Shi J."/>
            <person name="Liu J."/>
            <person name="Lv H."/>
            <person name="Li J."/>
            <person name="Wang J."/>
            <person name="Deng Y."/>
            <person name="Ran L."/>
            <person name="Shi X."/>
            <person name="Wang X."/>
            <person name="Wu Q."/>
            <person name="Li C."/>
            <person name="Ren X."/>
            <person name="Wang J."/>
            <person name="Wang X."/>
            <person name="Li D."/>
            <person name="Liu D."/>
            <person name="Zhang X."/>
            <person name="Ji Z."/>
            <person name="Zhao W."/>
            <person name="Sun Y."/>
            <person name="Zhang Z."/>
            <person name="Bao J."/>
            <person name="Han Y."/>
            <person name="Dong L."/>
            <person name="Ji J."/>
            <person name="Chen P."/>
            <person name="Wu S."/>
            <person name="Liu J."/>
            <person name="Xiao Y."/>
            <person name="Bu D."/>
            <person name="Tan J."/>
            <person name="Yang L."/>
            <person name="Ye C."/>
            <person name="Zhang J."/>
            <person name="Xu J."/>
            <person name="Zhou Y."/>
            <person name="Yu Y."/>
            <person name="Zhang B."/>
            <person name="Zhuang S."/>
            <person name="Wei H."/>
            <person name="Liu B."/>
            <person name="Lei M."/>
            <person name="Yu H."/>
            <person name="Li Y."/>
            <person name="Xu H."/>
            <person name="Wei S."/>
            <person name="He X."/>
            <person name="Fang L."/>
            <person name="Zhang Z."/>
            <person name="Zhang Y."/>
            <person name="Huang X."/>
            <person name="Su Z."/>
            <person name="Tong W."/>
            <person name="Li J."/>
            <person name="Tong Z."/>
            <person name="Li S."/>
            <person name="Ye J."/>
            <person name="Wang L."/>
            <person name="Fang L."/>
            <person name="Lei T."/>
            <person name="Chen C.-S."/>
            <person name="Chen H.-C."/>
            <person name="Xu Z."/>
            <person name="Li H."/>
            <person name="Huang H."/>
            <person name="Zhang F."/>
            <person name="Xu H."/>
            <person name="Li N."/>
            <person name="Zhao C."/>
            <person name="Li S."/>
            <person name="Dong L."/>
            <person name="Huang Y."/>
            <person name="Li L."/>
            <person name="Xi Y."/>
            <person name="Qi Q."/>
            <person name="Li W."/>
            <person name="Zhang B."/>
            <person name="Hu W."/>
            <person name="Zhang Y."/>
            <person name="Tian X."/>
            <person name="Jiao Y."/>
            <person name="Liang X."/>
            <person name="Jin J."/>
            <person name="Gao L."/>
            <person name="Zheng W."/>
            <person name="Hao B."/>
            <person name="Liu S.-M."/>
            <person name="Wang W."/>
            <person name="Yuan L."/>
            <person name="Cao M."/>
            <person name="McDermott J."/>
            <person name="Samudrala R."/>
            <person name="Wang J."/>
            <person name="Wong G.K.-S."/>
            <person name="Yang H."/>
        </authorList>
    </citation>
    <scope>NUCLEOTIDE SEQUENCE [LARGE SCALE GENOMIC DNA]</scope>
    <source>
        <strain>cv. Nipponbare</strain>
    </source>
</reference>
<reference key="6">
    <citation type="journal article" date="2003" name="Science">
        <title>Collection, mapping, and annotation of over 28,000 cDNA clones from japonica rice.</title>
        <authorList>
            <consortium name="The rice full-length cDNA consortium"/>
        </authorList>
    </citation>
    <scope>NUCLEOTIDE SEQUENCE [LARGE SCALE MRNA]</scope>
    <source>
        <strain>cv. Nipponbare</strain>
    </source>
</reference>
<reference key="7">
    <citation type="journal article" date="2006" name="Funct. Integr. Genomics">
        <title>Structure and expression analysis of early auxin-responsive Aux/IAA gene family in rice (Oryza sativa).</title>
        <authorList>
            <person name="Jain M."/>
            <person name="Kaur N."/>
            <person name="Garg R."/>
            <person name="Thakur J.K."/>
            <person name="Tyagi A.K."/>
            <person name="Khurana J.P."/>
        </authorList>
    </citation>
    <scope>TISSUE SPECIFICITY</scope>
    <scope>INDUCTION</scope>
    <scope>NOMENCLATURE</scope>
</reference>
<evidence type="ECO:0000250" key="1"/>
<evidence type="ECO:0000255" key="2">
    <source>
        <dbReference type="PROSITE-ProRule" id="PRU01081"/>
    </source>
</evidence>
<evidence type="ECO:0000256" key="3">
    <source>
        <dbReference type="SAM" id="MobiDB-lite"/>
    </source>
</evidence>
<evidence type="ECO:0000269" key="4">
    <source>
    </source>
</evidence>
<evidence type="ECO:0000305" key="5"/>
<evidence type="ECO:0000312" key="6">
    <source>
        <dbReference type="EMBL" id="EEE64413.1"/>
    </source>
</evidence>